<reference key="1">
    <citation type="submission" date="2005-08" db="EMBL/GenBank/DDBJ databases">
        <title>Complete sequence of Synechococcus sp. CC9902.</title>
        <authorList>
            <person name="Copeland A."/>
            <person name="Lucas S."/>
            <person name="Lapidus A."/>
            <person name="Barry K."/>
            <person name="Detter J.C."/>
            <person name="Glavina T."/>
            <person name="Hammon N."/>
            <person name="Israni S."/>
            <person name="Pitluck S."/>
            <person name="Martinez M."/>
            <person name="Schmutz J."/>
            <person name="Larimer F."/>
            <person name="Land M."/>
            <person name="Kyrpides N."/>
            <person name="Ivanova N."/>
            <person name="Richardson P."/>
        </authorList>
    </citation>
    <scope>NUCLEOTIDE SEQUENCE [LARGE SCALE GENOMIC DNA]</scope>
    <source>
        <strain>CC9902</strain>
    </source>
</reference>
<sequence>MADRLVRATAAGGGIRLVAVSTTETLREAQARHGLSLLTAVMLGRAMSAGLMLASSMKVRHGRVNLRLGSDGPIKGLMVDAGRDGTVRGYVGEPALELDPISDEKGNYGFNFKAAAGTGYLHVMRDDGKGEPFNSTVELVGGAIGEDVASYLLHSEQTPSGVFVGEKINRDGILCSGGLLVQILPKAAEEPALVELIEQRCREIEGFSERLAACNNNLEDLLIDVFPDLDPQPLTDTEATQDVRFKCRCTRERSIGALLLLGRKELSEMLEADGQAELTCHFCNNRYVVEREELIGIIEGLPAAV</sequence>
<feature type="chain" id="PRO_0000238103" description="33 kDa chaperonin">
    <location>
        <begin position="1"/>
        <end position="305"/>
    </location>
</feature>
<feature type="disulfide bond" description="Redox-active" evidence="1">
    <location>
        <begin position="247"/>
        <end position="249"/>
    </location>
</feature>
<feature type="disulfide bond" description="Redox-active" evidence="1">
    <location>
        <begin position="280"/>
        <end position="283"/>
    </location>
</feature>
<organism>
    <name type="scientific">Synechococcus sp. (strain CC9902)</name>
    <dbReference type="NCBI Taxonomy" id="316279"/>
    <lineage>
        <taxon>Bacteria</taxon>
        <taxon>Bacillati</taxon>
        <taxon>Cyanobacteriota</taxon>
        <taxon>Cyanophyceae</taxon>
        <taxon>Synechococcales</taxon>
        <taxon>Synechococcaceae</taxon>
        <taxon>Synechococcus</taxon>
    </lineage>
</organism>
<evidence type="ECO:0000255" key="1">
    <source>
        <dbReference type="HAMAP-Rule" id="MF_00117"/>
    </source>
</evidence>
<dbReference type="EMBL" id="CP000097">
    <property type="protein sequence ID" value="ABB26159.1"/>
    <property type="molecule type" value="Genomic_DNA"/>
</dbReference>
<dbReference type="RefSeq" id="WP_011359986.1">
    <property type="nucleotide sequence ID" value="NC_007513.1"/>
</dbReference>
<dbReference type="SMR" id="Q3AXM7"/>
<dbReference type="STRING" id="316279.Syncc9902_1195"/>
<dbReference type="KEGG" id="sye:Syncc9902_1195"/>
<dbReference type="eggNOG" id="COG1281">
    <property type="taxonomic scope" value="Bacteria"/>
</dbReference>
<dbReference type="HOGENOM" id="CLU_054493_1_0_3"/>
<dbReference type="OrthoDB" id="9776534at2"/>
<dbReference type="Proteomes" id="UP000002712">
    <property type="component" value="Chromosome"/>
</dbReference>
<dbReference type="GO" id="GO:0005737">
    <property type="term" value="C:cytoplasm"/>
    <property type="evidence" value="ECO:0007669"/>
    <property type="project" value="UniProtKB-SubCell"/>
</dbReference>
<dbReference type="GO" id="GO:0044183">
    <property type="term" value="F:protein folding chaperone"/>
    <property type="evidence" value="ECO:0007669"/>
    <property type="project" value="TreeGrafter"/>
</dbReference>
<dbReference type="GO" id="GO:0051082">
    <property type="term" value="F:unfolded protein binding"/>
    <property type="evidence" value="ECO:0007669"/>
    <property type="project" value="UniProtKB-UniRule"/>
</dbReference>
<dbReference type="GO" id="GO:0042026">
    <property type="term" value="P:protein refolding"/>
    <property type="evidence" value="ECO:0007669"/>
    <property type="project" value="TreeGrafter"/>
</dbReference>
<dbReference type="CDD" id="cd00498">
    <property type="entry name" value="Hsp33"/>
    <property type="match status" value="1"/>
</dbReference>
<dbReference type="Gene3D" id="3.55.30.10">
    <property type="entry name" value="Hsp33 domain"/>
    <property type="match status" value="1"/>
</dbReference>
<dbReference type="Gene3D" id="3.90.1280.10">
    <property type="entry name" value="HSP33 redox switch-like"/>
    <property type="match status" value="1"/>
</dbReference>
<dbReference type="HAMAP" id="MF_00117">
    <property type="entry name" value="HslO"/>
    <property type="match status" value="1"/>
</dbReference>
<dbReference type="InterPro" id="IPR000397">
    <property type="entry name" value="Heat_shock_Hsp33"/>
</dbReference>
<dbReference type="InterPro" id="IPR016154">
    <property type="entry name" value="Heat_shock_Hsp33_C"/>
</dbReference>
<dbReference type="InterPro" id="IPR016153">
    <property type="entry name" value="Heat_shock_Hsp33_N"/>
</dbReference>
<dbReference type="NCBIfam" id="NF001033">
    <property type="entry name" value="PRK00114.1"/>
    <property type="match status" value="1"/>
</dbReference>
<dbReference type="PANTHER" id="PTHR30111">
    <property type="entry name" value="33 KDA CHAPERONIN"/>
    <property type="match status" value="1"/>
</dbReference>
<dbReference type="PANTHER" id="PTHR30111:SF1">
    <property type="entry name" value="33 KDA CHAPERONIN"/>
    <property type="match status" value="1"/>
</dbReference>
<dbReference type="Pfam" id="PF01430">
    <property type="entry name" value="HSP33"/>
    <property type="match status" value="1"/>
</dbReference>
<dbReference type="PIRSF" id="PIRSF005261">
    <property type="entry name" value="Heat_shock_Hsp33"/>
    <property type="match status" value="1"/>
</dbReference>
<dbReference type="SUPFAM" id="SSF64397">
    <property type="entry name" value="Hsp33 domain"/>
    <property type="match status" value="1"/>
</dbReference>
<dbReference type="SUPFAM" id="SSF118352">
    <property type="entry name" value="HSP33 redox switch-like"/>
    <property type="match status" value="1"/>
</dbReference>
<name>HSLO_SYNS9</name>
<accession>Q3AXM7</accession>
<gene>
    <name evidence="1" type="primary">hslO</name>
    <name type="ordered locus">Syncc9902_1195</name>
</gene>
<comment type="function">
    <text evidence="1">Redox regulated molecular chaperone. Protects both thermally unfolding and oxidatively damaged proteins from irreversible aggregation. Plays an important role in the bacterial defense system toward oxidative stress.</text>
</comment>
<comment type="subcellular location">
    <subcellularLocation>
        <location evidence="1">Cytoplasm</location>
    </subcellularLocation>
</comment>
<comment type="PTM">
    <text evidence="1">Under oxidizing conditions two disulfide bonds are formed involving the reactive cysteines. Under reducing conditions zinc is bound to the reactive cysteines and the protein is inactive.</text>
</comment>
<comment type="similarity">
    <text evidence="1">Belongs to the HSP33 family.</text>
</comment>
<proteinExistence type="inferred from homology"/>
<keyword id="KW-0143">Chaperone</keyword>
<keyword id="KW-0963">Cytoplasm</keyword>
<keyword id="KW-1015">Disulfide bond</keyword>
<keyword id="KW-0676">Redox-active center</keyword>
<keyword id="KW-1185">Reference proteome</keyword>
<keyword id="KW-0862">Zinc</keyword>
<protein>
    <recommendedName>
        <fullName evidence="1">33 kDa chaperonin</fullName>
    </recommendedName>
    <alternativeName>
        <fullName evidence="1">Heat shock protein 33 homolog</fullName>
        <shortName evidence="1">HSP33</shortName>
    </alternativeName>
</protein>